<gene>
    <name type="ORF">TRIREDRAFT_74223</name>
</gene>
<sequence>MVAFSSLICALTSIASTLAMPTGLEPESSVNVTERGMYDFVLGAHNDHRRRASINYDQNYQTGGQVSYSPSNTGFSVNWNTQDDFVVGVGWTTGSSAPINFGGSFSVNSGTGLLSVYGWSTNPLVEYYIMEDNHNYPAQGTVKGTVTSDGATYTIWENTRVNEPSIQGTATFNQYISVRNSPRTSGTVTVQNHFNAWASLGLHLGQMNYQVVAVEGWGGSGSASQSVSN</sequence>
<evidence type="ECO:0000250" key="1">
    <source>
        <dbReference type="UniProtKB" id="P36217"/>
    </source>
</evidence>
<evidence type="ECO:0000250" key="2">
    <source>
        <dbReference type="UniProtKB" id="P36218"/>
    </source>
</evidence>
<evidence type="ECO:0000255" key="3"/>
<evidence type="ECO:0000255" key="4">
    <source>
        <dbReference type="PROSITE-ProRule" id="PRU00498"/>
    </source>
</evidence>
<evidence type="ECO:0000255" key="5">
    <source>
        <dbReference type="PROSITE-ProRule" id="PRU01097"/>
    </source>
</evidence>
<evidence type="ECO:0000269" key="6">
    <source>
    </source>
</evidence>
<evidence type="ECO:0000269" key="7">
    <source>
    </source>
</evidence>
<evidence type="ECO:0000305" key="8">
    <source>
    </source>
</evidence>
<reference key="1">
    <citation type="journal article" date="2008" name="Nat. Biotechnol.">
        <title>Genome sequencing and analysis of the biomass-degrading fungus Trichoderma reesei (syn. Hypocrea jecorina).</title>
        <authorList>
            <person name="Martinez D."/>
            <person name="Berka R.M."/>
            <person name="Henrissat B."/>
            <person name="Saloheimo M."/>
            <person name="Arvas M."/>
            <person name="Baker S.E."/>
            <person name="Chapman J."/>
            <person name="Chertkov O."/>
            <person name="Coutinho P.M."/>
            <person name="Cullen D."/>
            <person name="Danchin E.G."/>
            <person name="Grigoriev I.V."/>
            <person name="Harris P."/>
            <person name="Jackson M."/>
            <person name="Kubicek C.P."/>
            <person name="Han C.S."/>
            <person name="Ho I."/>
            <person name="Larrondo L.F."/>
            <person name="de Leon A.L."/>
            <person name="Magnuson J.K."/>
            <person name="Merino S."/>
            <person name="Misra M."/>
            <person name="Nelson B."/>
            <person name="Putnam N."/>
            <person name="Robbertse B."/>
            <person name="Salamov A.A."/>
            <person name="Schmoll M."/>
            <person name="Terry A."/>
            <person name="Thayer N."/>
            <person name="Westerholm-Parvinen A."/>
            <person name="Schoch C.L."/>
            <person name="Yao J."/>
            <person name="Barabote R."/>
            <person name="Nelson M.A."/>
            <person name="Detter C."/>
            <person name="Bruce D."/>
            <person name="Kuske C.R."/>
            <person name="Xie G."/>
            <person name="Richardson P."/>
            <person name="Rokhsar D.S."/>
            <person name="Lucas S.M."/>
            <person name="Rubin E.M."/>
            <person name="Dunn-Coleman N."/>
            <person name="Ward M."/>
            <person name="Brettin T.S."/>
        </authorList>
    </citation>
    <scope>NUCLEOTIDE SEQUENCE [LARGE SCALE GENOMIC DNA]</scope>
    <source>
        <strain>QM6a</strain>
    </source>
</reference>
<reference key="2">
    <citation type="journal article" date="1998" name="Appl. Environ. Microbiol.">
        <title>Role of endoproteolytic dibasic proprotein processing in maturation of secretory proteins in Trichoderma reesei.</title>
        <authorList>
            <person name="Goller S.P."/>
            <person name="Schoisswohl D."/>
            <person name="Baron M."/>
            <person name="Parriche M."/>
            <person name="Kubicek C.P."/>
        </authorList>
    </citation>
    <scope>SUBCELLULAR LOCATION</scope>
    <scope>PROTEOLYTIC PROCESSING</scope>
</reference>
<reference key="3">
    <citation type="journal article" date="2013" name="Eukaryot. Cell">
        <title>Xylanase gene transcription in Trichoderma reesei is triggered by different inducers representing different hemicellulosic pentose polymers.</title>
        <authorList>
            <person name="Herold S."/>
            <person name="Bischof R."/>
            <person name="Metz B."/>
            <person name="Seiboth B."/>
            <person name="Kubicek C.P."/>
        </authorList>
    </citation>
    <scope>INDUCTION</scope>
</reference>
<dbReference type="EC" id="3.2.1.8" evidence="5"/>
<dbReference type="EMBL" id="GL985056">
    <property type="protein sequence ID" value="EGR52985.1"/>
    <property type="molecule type" value="Genomic_DNA"/>
</dbReference>
<dbReference type="RefSeq" id="XP_006961811.1">
    <property type="nucleotide sequence ID" value="XM_006961749.1"/>
</dbReference>
<dbReference type="SMR" id="G0R947"/>
<dbReference type="STRING" id="431241.G0R947"/>
<dbReference type="EnsemblFungi" id="EGR52985">
    <property type="protein sequence ID" value="EGR52985"/>
    <property type="gene ID" value="TRIREDRAFT_74223"/>
</dbReference>
<dbReference type="GeneID" id="18488311"/>
<dbReference type="KEGG" id="tre:TRIREDRAFT_74223"/>
<dbReference type="VEuPathDB" id="FungiDB:TRIREDRAFT_74223"/>
<dbReference type="eggNOG" id="ENOG502RXA7">
    <property type="taxonomic scope" value="Eukaryota"/>
</dbReference>
<dbReference type="HOGENOM" id="CLU_052631_0_2_1"/>
<dbReference type="OrthoDB" id="2115822at2759"/>
<dbReference type="UniPathway" id="UPA00114"/>
<dbReference type="Proteomes" id="UP000008984">
    <property type="component" value="Unassembled WGS sequence"/>
</dbReference>
<dbReference type="GO" id="GO:0005576">
    <property type="term" value="C:extracellular region"/>
    <property type="evidence" value="ECO:0007669"/>
    <property type="project" value="UniProtKB-SubCell"/>
</dbReference>
<dbReference type="GO" id="GO:0031176">
    <property type="term" value="F:endo-1,4-beta-xylanase activity"/>
    <property type="evidence" value="ECO:0007669"/>
    <property type="project" value="UniProtKB-EC"/>
</dbReference>
<dbReference type="GO" id="GO:0045493">
    <property type="term" value="P:xylan catabolic process"/>
    <property type="evidence" value="ECO:0007669"/>
    <property type="project" value="UniProtKB-UniPathway"/>
</dbReference>
<dbReference type="FunFam" id="2.60.120.180:FF:000002">
    <property type="entry name" value="Endo-1,4-beta-xylanase A"/>
    <property type="match status" value="1"/>
</dbReference>
<dbReference type="Gene3D" id="2.60.120.180">
    <property type="match status" value="1"/>
</dbReference>
<dbReference type="InterPro" id="IPR013320">
    <property type="entry name" value="ConA-like_dom_sf"/>
</dbReference>
<dbReference type="InterPro" id="IPR013319">
    <property type="entry name" value="GH11/12"/>
</dbReference>
<dbReference type="InterPro" id="IPR018208">
    <property type="entry name" value="GH11_AS_1"/>
</dbReference>
<dbReference type="InterPro" id="IPR033119">
    <property type="entry name" value="GH11_AS_2"/>
</dbReference>
<dbReference type="InterPro" id="IPR033123">
    <property type="entry name" value="GH11_dom"/>
</dbReference>
<dbReference type="InterPro" id="IPR001137">
    <property type="entry name" value="Glyco_hydro_11"/>
</dbReference>
<dbReference type="PANTHER" id="PTHR46828:SF4">
    <property type="entry name" value="ENDO-1,4-BETA-XYLANASE"/>
    <property type="match status" value="1"/>
</dbReference>
<dbReference type="PANTHER" id="PTHR46828">
    <property type="entry name" value="ENDO-1,4-BETA-XYLANASE A-RELATED"/>
    <property type="match status" value="1"/>
</dbReference>
<dbReference type="Pfam" id="PF00457">
    <property type="entry name" value="Glyco_hydro_11"/>
    <property type="match status" value="1"/>
</dbReference>
<dbReference type="PRINTS" id="PR00911">
    <property type="entry name" value="GLHYDRLASE11"/>
</dbReference>
<dbReference type="SUPFAM" id="SSF49899">
    <property type="entry name" value="Concanavalin A-like lectins/glucanases"/>
    <property type="match status" value="1"/>
</dbReference>
<dbReference type="PROSITE" id="PS00776">
    <property type="entry name" value="GH11_1"/>
    <property type="match status" value="1"/>
</dbReference>
<dbReference type="PROSITE" id="PS00777">
    <property type="entry name" value="GH11_2"/>
    <property type="match status" value="1"/>
</dbReference>
<dbReference type="PROSITE" id="PS51761">
    <property type="entry name" value="GH11_3"/>
    <property type="match status" value="1"/>
</dbReference>
<feature type="signal peptide" evidence="3">
    <location>
        <begin position="1"/>
        <end position="19"/>
    </location>
</feature>
<feature type="propeptide" id="PRO_0000436703" evidence="2 8">
    <location>
        <begin position="20"/>
        <end position="51"/>
    </location>
</feature>
<feature type="chain" id="PRO_5003408111" description="Endo-1,4-beta-xylanase 1">
    <location>
        <begin position="52"/>
        <end position="229"/>
    </location>
</feature>
<feature type="domain" description="GH11" evidence="5">
    <location>
        <begin position="42"/>
        <end position="228"/>
    </location>
</feature>
<feature type="active site" description="Nucleophile" evidence="5">
    <location>
        <position position="126"/>
    </location>
</feature>
<feature type="active site" description="Proton donor" evidence="5">
    <location>
        <position position="215"/>
    </location>
</feature>
<feature type="binding site" evidence="1">
    <location>
        <position position="117"/>
    </location>
    <ligand>
        <name>substrate</name>
    </ligand>
</feature>
<feature type="binding site" evidence="1">
    <location>
        <position position="128"/>
    </location>
    <ligand>
        <name>substrate</name>
    </ligand>
</feature>
<feature type="binding site" evidence="1">
    <location>
        <position position="160"/>
    </location>
    <ligand>
        <name>substrate</name>
    </ligand>
</feature>
<feature type="binding site" evidence="1">
    <location>
        <position position="164"/>
    </location>
    <ligand>
        <name>substrate</name>
    </ligand>
</feature>
<feature type="binding site" evidence="1">
    <location>
        <position position="174"/>
    </location>
    <ligand>
        <name>substrate</name>
    </ligand>
</feature>
<feature type="binding site" evidence="1">
    <location>
        <position position="209"/>
    </location>
    <ligand>
        <name>substrate</name>
    </ligand>
</feature>
<feature type="glycosylation site" description="N-linked (GlcNAc...) asparagine" evidence="4">
    <location>
        <position position="31"/>
    </location>
</feature>
<protein>
    <recommendedName>
        <fullName>Endo-1,4-beta-xylanase 1</fullName>
        <shortName>EX 1</shortName>
        <shortName>Xylanase 1</shortName>
        <ecNumber evidence="5">3.2.1.8</ecNumber>
    </recommendedName>
    <alternativeName>
        <fullName>1,4-beta-D-xylan xylanohydrolase 1</fullName>
    </alternativeName>
    <alternativeName>
        <fullName>Acidic endo-beta-1,4-xylanase</fullName>
    </alternativeName>
</protein>
<accession>G0R947</accession>
<name>XYN1_HYPJQ</name>
<comment type="function">
    <text evidence="2">Glycoside hydrolase involved in the hydrolysis of xylan, a major plant cell wall hemicellulose made up of 1,4-beta-linked D-xylopyranose residues. Catalyzes the endohydrolysis of the main-chain 1,4-beta-glycosidic bonds connecting the xylose subunits yielding various xylooligosaccharides and xylose.</text>
</comment>
<comment type="catalytic activity">
    <reaction evidence="2">
        <text>Endohydrolysis of (1-&gt;4)-beta-D-xylosidic linkages in xylans.</text>
        <dbReference type="EC" id="3.2.1.8"/>
    </reaction>
</comment>
<comment type="pathway">
    <text evidence="5">Glycan degradation; xylan degradation.</text>
</comment>
<comment type="subcellular location">
    <subcellularLocation>
        <location evidence="7">Secreted</location>
    </subcellularLocation>
</comment>
<comment type="induction">
    <text evidence="6">Induced by D-xylose and L-arabinose, dependent on the cellulase and xylanase regulator xyr1. Repressed by glucose through negative regulation by the crabon catabolite repressor cre1.</text>
</comment>
<comment type="similarity">
    <text evidence="5">Belongs to the glycosyl hydrolase 11 (cellulase G) family.</text>
</comment>
<keyword id="KW-0119">Carbohydrate metabolism</keyword>
<keyword id="KW-0325">Glycoprotein</keyword>
<keyword id="KW-0326">Glycosidase</keyword>
<keyword id="KW-0378">Hydrolase</keyword>
<keyword id="KW-0624">Polysaccharide degradation</keyword>
<keyword id="KW-1185">Reference proteome</keyword>
<keyword id="KW-0964">Secreted</keyword>
<keyword id="KW-0732">Signal</keyword>
<keyword id="KW-0858">Xylan degradation</keyword>
<organism>
    <name type="scientific">Hypocrea jecorina (strain QM6a)</name>
    <name type="common">Trichoderma reesei</name>
    <dbReference type="NCBI Taxonomy" id="431241"/>
    <lineage>
        <taxon>Eukaryota</taxon>
        <taxon>Fungi</taxon>
        <taxon>Dikarya</taxon>
        <taxon>Ascomycota</taxon>
        <taxon>Pezizomycotina</taxon>
        <taxon>Sordariomycetes</taxon>
        <taxon>Hypocreomycetidae</taxon>
        <taxon>Hypocreales</taxon>
        <taxon>Hypocreaceae</taxon>
        <taxon>Trichoderma</taxon>
    </lineage>
</organism>
<proteinExistence type="evidence at protein level"/>